<sequence>MRKLVVGSRRSKLALTQSQQFIDKLKAVEPNLEIEIKEIVTKGDRIVDKQLSKVGGKGLFVKEIQHELFEKNIDMAIHSLKDVPSVIPEGLTLGCIPDRELPFDAYISKTHTPLSQLPEGSIIGTSSLRRGAQILSKYPNLEIKWIRGNIDTRLEKLQTEDYDAIILAAAGLRRMGWSDDIVTSYLDRDTLLPAIGQGALGIECRSDDEELLTLLSKVHNDEVAKCVTAERTFLAEMDGSCQVPIAGYATISDQKEIEFTGLIMTPDGKERFEYTMNGTDPVELGKKVSNKLKEQGAYEIIKRLNEQH</sequence>
<reference key="1">
    <citation type="journal article" date="2004" name="Proc. Natl. Acad. Sci. U.S.A.">
        <title>Complete genomes of two clinical Staphylococcus aureus strains: evidence for the rapid evolution of virulence and drug resistance.</title>
        <authorList>
            <person name="Holden M.T.G."/>
            <person name="Feil E.J."/>
            <person name="Lindsay J.A."/>
            <person name="Peacock S.J."/>
            <person name="Day N.P.J."/>
            <person name="Enright M.C."/>
            <person name="Foster T.J."/>
            <person name="Moore C.E."/>
            <person name="Hurst L."/>
            <person name="Atkin R."/>
            <person name="Barron A."/>
            <person name="Bason N."/>
            <person name="Bentley S.D."/>
            <person name="Chillingworth C."/>
            <person name="Chillingworth T."/>
            <person name="Churcher C."/>
            <person name="Clark L."/>
            <person name="Corton C."/>
            <person name="Cronin A."/>
            <person name="Doggett J."/>
            <person name="Dowd L."/>
            <person name="Feltwell T."/>
            <person name="Hance Z."/>
            <person name="Harris B."/>
            <person name="Hauser H."/>
            <person name="Holroyd S."/>
            <person name="Jagels K."/>
            <person name="James K.D."/>
            <person name="Lennard N."/>
            <person name="Line A."/>
            <person name="Mayes R."/>
            <person name="Moule S."/>
            <person name="Mungall K."/>
            <person name="Ormond D."/>
            <person name="Quail M.A."/>
            <person name="Rabbinowitsch E."/>
            <person name="Rutherford K.M."/>
            <person name="Sanders M."/>
            <person name="Sharp S."/>
            <person name="Simmonds M."/>
            <person name="Stevens K."/>
            <person name="Whitehead S."/>
            <person name="Barrell B.G."/>
            <person name="Spratt B.G."/>
            <person name="Parkhill J."/>
        </authorList>
    </citation>
    <scope>NUCLEOTIDE SEQUENCE [LARGE SCALE GENOMIC DNA]</scope>
    <source>
        <strain>MRSA252</strain>
    </source>
</reference>
<keyword id="KW-0627">Porphyrin biosynthesis</keyword>
<keyword id="KW-0808">Transferase</keyword>
<dbReference type="EC" id="2.5.1.61" evidence="1"/>
<dbReference type="EMBL" id="BX571856">
    <property type="protein sequence ID" value="CAG40741.1"/>
    <property type="molecule type" value="Genomic_DNA"/>
</dbReference>
<dbReference type="RefSeq" id="WP_001230225.1">
    <property type="nucleotide sequence ID" value="NC_002952.2"/>
</dbReference>
<dbReference type="SMR" id="Q6GG35"/>
<dbReference type="KEGG" id="sar:SAR1750"/>
<dbReference type="HOGENOM" id="CLU_019704_0_2_9"/>
<dbReference type="UniPathway" id="UPA00251">
    <property type="reaction ID" value="UER00319"/>
</dbReference>
<dbReference type="Proteomes" id="UP000000596">
    <property type="component" value="Chromosome"/>
</dbReference>
<dbReference type="GO" id="GO:0005737">
    <property type="term" value="C:cytoplasm"/>
    <property type="evidence" value="ECO:0007669"/>
    <property type="project" value="TreeGrafter"/>
</dbReference>
<dbReference type="GO" id="GO:0004418">
    <property type="term" value="F:hydroxymethylbilane synthase activity"/>
    <property type="evidence" value="ECO:0007669"/>
    <property type="project" value="UniProtKB-UniRule"/>
</dbReference>
<dbReference type="GO" id="GO:0006782">
    <property type="term" value="P:protoporphyrinogen IX biosynthetic process"/>
    <property type="evidence" value="ECO:0007669"/>
    <property type="project" value="UniProtKB-UniRule"/>
</dbReference>
<dbReference type="CDD" id="cd13646">
    <property type="entry name" value="PBP2_EcHMBS_like"/>
    <property type="match status" value="1"/>
</dbReference>
<dbReference type="FunFam" id="3.30.160.40:FF:000001">
    <property type="entry name" value="Porphobilinogen deaminase"/>
    <property type="match status" value="1"/>
</dbReference>
<dbReference type="FunFam" id="3.40.190.10:FF:000004">
    <property type="entry name" value="Porphobilinogen deaminase"/>
    <property type="match status" value="1"/>
</dbReference>
<dbReference type="FunFam" id="3.40.190.10:FF:000005">
    <property type="entry name" value="Porphobilinogen deaminase"/>
    <property type="match status" value="1"/>
</dbReference>
<dbReference type="Gene3D" id="3.40.190.10">
    <property type="entry name" value="Periplasmic binding protein-like II"/>
    <property type="match status" value="2"/>
</dbReference>
<dbReference type="Gene3D" id="3.30.160.40">
    <property type="entry name" value="Porphobilinogen deaminase, C-terminal domain"/>
    <property type="match status" value="1"/>
</dbReference>
<dbReference type="HAMAP" id="MF_00260">
    <property type="entry name" value="Porphobil_deam"/>
    <property type="match status" value="1"/>
</dbReference>
<dbReference type="InterPro" id="IPR000860">
    <property type="entry name" value="HemC"/>
</dbReference>
<dbReference type="InterPro" id="IPR022419">
    <property type="entry name" value="Porphobilin_deaminase_cofac_BS"/>
</dbReference>
<dbReference type="InterPro" id="IPR022417">
    <property type="entry name" value="Porphobilin_deaminase_N"/>
</dbReference>
<dbReference type="InterPro" id="IPR022418">
    <property type="entry name" value="Porphobilinogen_deaminase_C"/>
</dbReference>
<dbReference type="InterPro" id="IPR036803">
    <property type="entry name" value="Porphobilinogen_deaminase_C_sf"/>
</dbReference>
<dbReference type="NCBIfam" id="TIGR00212">
    <property type="entry name" value="hemC"/>
    <property type="match status" value="1"/>
</dbReference>
<dbReference type="PANTHER" id="PTHR11557">
    <property type="entry name" value="PORPHOBILINOGEN DEAMINASE"/>
    <property type="match status" value="1"/>
</dbReference>
<dbReference type="PANTHER" id="PTHR11557:SF0">
    <property type="entry name" value="PORPHOBILINOGEN DEAMINASE"/>
    <property type="match status" value="1"/>
</dbReference>
<dbReference type="Pfam" id="PF01379">
    <property type="entry name" value="Porphobil_deam"/>
    <property type="match status" value="1"/>
</dbReference>
<dbReference type="Pfam" id="PF03900">
    <property type="entry name" value="Porphobil_deamC"/>
    <property type="match status" value="1"/>
</dbReference>
<dbReference type="PIRSF" id="PIRSF001438">
    <property type="entry name" value="4pyrrol_synth_OHMeBilane_synth"/>
    <property type="match status" value="1"/>
</dbReference>
<dbReference type="PRINTS" id="PR00151">
    <property type="entry name" value="PORPHBDMNASE"/>
</dbReference>
<dbReference type="SUPFAM" id="SSF53850">
    <property type="entry name" value="Periplasmic binding protein-like II"/>
    <property type="match status" value="1"/>
</dbReference>
<dbReference type="SUPFAM" id="SSF54782">
    <property type="entry name" value="Porphobilinogen deaminase (hydroxymethylbilane synthase), C-terminal domain"/>
    <property type="match status" value="1"/>
</dbReference>
<dbReference type="PROSITE" id="PS00533">
    <property type="entry name" value="PORPHOBILINOGEN_DEAM"/>
    <property type="match status" value="1"/>
</dbReference>
<organism>
    <name type="scientific">Staphylococcus aureus (strain MRSA252)</name>
    <dbReference type="NCBI Taxonomy" id="282458"/>
    <lineage>
        <taxon>Bacteria</taxon>
        <taxon>Bacillati</taxon>
        <taxon>Bacillota</taxon>
        <taxon>Bacilli</taxon>
        <taxon>Bacillales</taxon>
        <taxon>Staphylococcaceae</taxon>
        <taxon>Staphylococcus</taxon>
    </lineage>
</organism>
<feature type="chain" id="PRO_0000142991" description="Porphobilinogen deaminase">
    <location>
        <begin position="1"/>
        <end position="308"/>
    </location>
</feature>
<feature type="modified residue" description="S-(dipyrrolylmethanemethyl)cysteine" evidence="1">
    <location>
        <position position="241"/>
    </location>
</feature>
<evidence type="ECO:0000255" key="1">
    <source>
        <dbReference type="HAMAP-Rule" id="MF_00260"/>
    </source>
</evidence>
<proteinExistence type="inferred from homology"/>
<accession>Q6GG35</accession>
<gene>
    <name evidence="1" type="primary">hemC</name>
    <name type="ordered locus">SAR1750</name>
</gene>
<protein>
    <recommendedName>
        <fullName evidence="1">Porphobilinogen deaminase</fullName>
        <shortName evidence="1">PBG</shortName>
        <ecNumber evidence="1">2.5.1.61</ecNumber>
    </recommendedName>
    <alternativeName>
        <fullName evidence="1">Hydroxymethylbilane synthase</fullName>
        <shortName evidence="1">HMBS</shortName>
    </alternativeName>
    <alternativeName>
        <fullName evidence="1">Pre-uroporphyrinogen synthase</fullName>
    </alternativeName>
</protein>
<name>HEM3_STAAR</name>
<comment type="function">
    <text evidence="1">Tetrapolymerization of the monopyrrole PBG into the hydroxymethylbilane pre-uroporphyrinogen in several discrete steps.</text>
</comment>
<comment type="catalytic activity">
    <reaction evidence="1">
        <text>4 porphobilinogen + H2O = hydroxymethylbilane + 4 NH4(+)</text>
        <dbReference type="Rhea" id="RHEA:13185"/>
        <dbReference type="ChEBI" id="CHEBI:15377"/>
        <dbReference type="ChEBI" id="CHEBI:28938"/>
        <dbReference type="ChEBI" id="CHEBI:57845"/>
        <dbReference type="ChEBI" id="CHEBI:58126"/>
        <dbReference type="EC" id="2.5.1.61"/>
    </reaction>
</comment>
<comment type="cofactor">
    <cofactor evidence="1">
        <name>dipyrromethane</name>
        <dbReference type="ChEBI" id="CHEBI:60342"/>
    </cofactor>
    <text evidence="1">Binds 1 dipyrromethane group covalently.</text>
</comment>
<comment type="pathway">
    <text evidence="1">Porphyrin-containing compound metabolism; protoporphyrin-IX biosynthesis; coproporphyrinogen-III from 5-aminolevulinate: step 2/4.</text>
</comment>
<comment type="subunit">
    <text evidence="1">Monomer.</text>
</comment>
<comment type="miscellaneous">
    <text evidence="1">The porphobilinogen subunits are added to the dipyrromethane group.</text>
</comment>
<comment type="similarity">
    <text evidence="1">Belongs to the HMBS family.</text>
</comment>